<dbReference type="PIR" id="A90086">
    <property type="entry name" value="HBKGR"/>
</dbReference>
<dbReference type="SMR" id="P02107"/>
<dbReference type="GO" id="GO:0072562">
    <property type="term" value="C:blood microparticle"/>
    <property type="evidence" value="ECO:0007669"/>
    <property type="project" value="TreeGrafter"/>
</dbReference>
<dbReference type="GO" id="GO:0031838">
    <property type="term" value="C:haptoglobin-hemoglobin complex"/>
    <property type="evidence" value="ECO:0007669"/>
    <property type="project" value="TreeGrafter"/>
</dbReference>
<dbReference type="GO" id="GO:0005833">
    <property type="term" value="C:hemoglobin complex"/>
    <property type="evidence" value="ECO:0007669"/>
    <property type="project" value="InterPro"/>
</dbReference>
<dbReference type="GO" id="GO:0031720">
    <property type="term" value="F:haptoglobin binding"/>
    <property type="evidence" value="ECO:0007669"/>
    <property type="project" value="TreeGrafter"/>
</dbReference>
<dbReference type="GO" id="GO:0020037">
    <property type="term" value="F:heme binding"/>
    <property type="evidence" value="ECO:0007669"/>
    <property type="project" value="InterPro"/>
</dbReference>
<dbReference type="GO" id="GO:0046872">
    <property type="term" value="F:metal ion binding"/>
    <property type="evidence" value="ECO:0007669"/>
    <property type="project" value="UniProtKB-KW"/>
</dbReference>
<dbReference type="GO" id="GO:0043177">
    <property type="term" value="F:organic acid binding"/>
    <property type="evidence" value="ECO:0007669"/>
    <property type="project" value="TreeGrafter"/>
</dbReference>
<dbReference type="GO" id="GO:0019825">
    <property type="term" value="F:oxygen binding"/>
    <property type="evidence" value="ECO:0007669"/>
    <property type="project" value="InterPro"/>
</dbReference>
<dbReference type="GO" id="GO:0005344">
    <property type="term" value="F:oxygen carrier activity"/>
    <property type="evidence" value="ECO:0007669"/>
    <property type="project" value="UniProtKB-KW"/>
</dbReference>
<dbReference type="GO" id="GO:0004601">
    <property type="term" value="F:peroxidase activity"/>
    <property type="evidence" value="ECO:0007669"/>
    <property type="project" value="TreeGrafter"/>
</dbReference>
<dbReference type="GO" id="GO:0042744">
    <property type="term" value="P:hydrogen peroxide catabolic process"/>
    <property type="evidence" value="ECO:0007669"/>
    <property type="project" value="TreeGrafter"/>
</dbReference>
<dbReference type="CDD" id="cd08925">
    <property type="entry name" value="Hb-beta-like"/>
    <property type="match status" value="1"/>
</dbReference>
<dbReference type="FunFam" id="1.10.490.10:FF:000001">
    <property type="entry name" value="Hemoglobin subunit beta"/>
    <property type="match status" value="1"/>
</dbReference>
<dbReference type="Gene3D" id="1.10.490.10">
    <property type="entry name" value="Globins"/>
    <property type="match status" value="1"/>
</dbReference>
<dbReference type="InterPro" id="IPR000971">
    <property type="entry name" value="Globin"/>
</dbReference>
<dbReference type="InterPro" id="IPR009050">
    <property type="entry name" value="Globin-like_sf"/>
</dbReference>
<dbReference type="InterPro" id="IPR012292">
    <property type="entry name" value="Globin/Proto"/>
</dbReference>
<dbReference type="InterPro" id="IPR002337">
    <property type="entry name" value="Hemoglobin_b"/>
</dbReference>
<dbReference type="InterPro" id="IPR050056">
    <property type="entry name" value="Hemoglobin_oxygen_transport"/>
</dbReference>
<dbReference type="PANTHER" id="PTHR11442">
    <property type="entry name" value="HEMOGLOBIN FAMILY MEMBER"/>
    <property type="match status" value="1"/>
</dbReference>
<dbReference type="PANTHER" id="PTHR11442:SF7">
    <property type="entry name" value="HEMOGLOBIN SUBUNIT EPSILON"/>
    <property type="match status" value="1"/>
</dbReference>
<dbReference type="Pfam" id="PF00042">
    <property type="entry name" value="Globin"/>
    <property type="match status" value="1"/>
</dbReference>
<dbReference type="PRINTS" id="PR00814">
    <property type="entry name" value="BETAHAEM"/>
</dbReference>
<dbReference type="SUPFAM" id="SSF46458">
    <property type="entry name" value="Globin-like"/>
    <property type="match status" value="1"/>
</dbReference>
<dbReference type="PROSITE" id="PS01033">
    <property type="entry name" value="GLOBIN"/>
    <property type="match status" value="1"/>
</dbReference>
<sequence length="146" mass="16002">VHLTAEEKNAITSLWGKVAIEQTGGEALGRLLIVYPWTSRFFDHFGDLSNAKAVMGNPKVLAHGAKVLVAFGDAIKNLDNLKGTFAKLSELHCDKLHVDPENFKLLGNIIVICLAEHFGKEFTIDTQVAWQKLVAGVANALAHKYH</sequence>
<reference key="1">
    <citation type="journal article" date="1971" name="Aust. J. Biol. Sci.">
        <title>Studies on marsupial proteins. VI. Evolutionary changes of beta-globins of the macropodidae and the amino acid sequence of beta-globin from Potorous tridactylus.</title>
        <authorList>
            <person name="Thompson E.O.P."/>
            <person name="Air G.M."/>
        </authorList>
    </citation>
    <scope>PARTIAL PROTEIN SEQUENCE</scope>
</reference>
<feature type="chain" id="PRO_0000053006" description="Hemoglobin subunit beta">
    <location>
        <begin position="1"/>
        <end position="146"/>
    </location>
</feature>
<feature type="domain" description="Globin" evidence="3">
    <location>
        <begin position="2"/>
        <end position="146"/>
    </location>
</feature>
<feature type="binding site" description="distal binding residue">
    <location>
        <position position="63"/>
    </location>
    <ligand>
        <name>heme b</name>
        <dbReference type="ChEBI" id="CHEBI:60344"/>
    </ligand>
    <ligandPart>
        <name>Fe</name>
        <dbReference type="ChEBI" id="CHEBI:18248"/>
    </ligandPart>
</feature>
<feature type="binding site" description="proximal binding residue">
    <location>
        <position position="92"/>
    </location>
    <ligand>
        <name>heme b</name>
        <dbReference type="ChEBI" id="CHEBI:60344"/>
    </ligand>
    <ligandPart>
        <name>Fe</name>
        <dbReference type="ChEBI" id="CHEBI:18248"/>
    </ligandPart>
</feature>
<feature type="modified residue" description="N-acetylvaline" evidence="1">
    <location>
        <position position="1"/>
    </location>
</feature>
<feature type="modified residue" description="Phosphothreonine" evidence="2">
    <location>
        <position position="12"/>
    </location>
</feature>
<feature type="modified residue" description="N6-acetyllysine" evidence="2">
    <location>
        <position position="59"/>
    </location>
</feature>
<feature type="modified residue" description="N6-acetyllysine" evidence="2">
    <location>
        <position position="82"/>
    </location>
</feature>
<feature type="modified residue" description="S-nitrosocysteine" evidence="2">
    <location>
        <position position="93"/>
    </location>
</feature>
<feature type="modified residue" description="N6-acetyllysine" evidence="2">
    <location>
        <position position="144"/>
    </location>
</feature>
<evidence type="ECO:0000250" key="1">
    <source>
        <dbReference type="UniProtKB" id="P02086"/>
    </source>
</evidence>
<evidence type="ECO:0000250" key="2">
    <source>
        <dbReference type="UniProtKB" id="P68871"/>
    </source>
</evidence>
<evidence type="ECO:0000255" key="3">
    <source>
        <dbReference type="PROSITE-ProRule" id="PRU00238"/>
    </source>
</evidence>
<name>HBB_OSPRU</name>
<proteinExistence type="evidence at protein level"/>
<protein>
    <recommendedName>
        <fullName>Hemoglobin subunit beta</fullName>
    </recommendedName>
    <alternativeName>
        <fullName>Beta-globin</fullName>
    </alternativeName>
    <alternativeName>
        <fullName>Hemoglobin beta chain</fullName>
    </alternativeName>
</protein>
<gene>
    <name type="primary">HBB</name>
</gene>
<keyword id="KW-0007">Acetylation</keyword>
<keyword id="KW-0903">Direct protein sequencing</keyword>
<keyword id="KW-0349">Heme</keyword>
<keyword id="KW-0408">Iron</keyword>
<keyword id="KW-0479">Metal-binding</keyword>
<keyword id="KW-0561">Oxygen transport</keyword>
<keyword id="KW-0597">Phosphoprotein</keyword>
<keyword id="KW-0702">S-nitrosylation</keyword>
<keyword id="KW-0813">Transport</keyword>
<organism>
    <name type="scientific">Osphranter rufus</name>
    <name type="common">Red kangaroo</name>
    <name type="synonym">Macropus rufus</name>
    <dbReference type="NCBI Taxonomy" id="9321"/>
    <lineage>
        <taxon>Eukaryota</taxon>
        <taxon>Metazoa</taxon>
        <taxon>Chordata</taxon>
        <taxon>Craniata</taxon>
        <taxon>Vertebrata</taxon>
        <taxon>Euteleostomi</taxon>
        <taxon>Mammalia</taxon>
        <taxon>Metatheria</taxon>
        <taxon>Diprotodontia</taxon>
        <taxon>Macropodidae</taxon>
        <taxon>Osphranter</taxon>
    </lineage>
</organism>
<comment type="function">
    <text>Involved in oxygen transport from the lung to the various peripheral tissues.</text>
</comment>
<comment type="subunit">
    <text>Heterotetramer of two alpha chains and two beta chains.</text>
</comment>
<comment type="tissue specificity">
    <text>Red blood cells.</text>
</comment>
<comment type="similarity">
    <text evidence="3">Belongs to the globin family.</text>
</comment>
<accession>P02107</accession>